<organism>
    <name type="scientific">Bacillus anthracis (strain CDC 684 / NRRL 3495)</name>
    <dbReference type="NCBI Taxonomy" id="568206"/>
    <lineage>
        <taxon>Bacteria</taxon>
        <taxon>Bacillati</taxon>
        <taxon>Bacillota</taxon>
        <taxon>Bacilli</taxon>
        <taxon>Bacillales</taxon>
        <taxon>Bacillaceae</taxon>
        <taxon>Bacillus</taxon>
        <taxon>Bacillus cereus group</taxon>
    </lineage>
</organism>
<gene>
    <name evidence="1" type="primary">mtnX</name>
    <name type="ordered locus">BAMEG_4297</name>
</gene>
<protein>
    <recommendedName>
        <fullName evidence="1">2-hydroxy-3-keto-5-methylthiopentenyl-1-phosphate phosphatase</fullName>
        <shortName evidence="1">HK-MTPenyl-1-P phosphatase</shortName>
        <ecNumber evidence="1">3.1.3.87</ecNumber>
    </recommendedName>
</protein>
<sequence length="219" mass="25290">MSIQVFCDFDGTITNNDNIMSIMEKFAPPEAEEVKNRILSQELSIQEGVSQLFQLIPTNLHDEIIQFLIETAEIRNGFHEFIQFVNENNISFYVISGGMDFFVYPLLQGLIPKEQIYCNETDFSNEYITVNWPHPCDRLCQNHCGLCKSSLIRKLSDTNDFHIVIGDSITDLQAAKQADKVFARDFLITKCEENHISYTPFETFHDVKTELKHLLEVKL</sequence>
<evidence type="ECO:0000255" key="1">
    <source>
        <dbReference type="HAMAP-Rule" id="MF_01680"/>
    </source>
</evidence>
<dbReference type="EC" id="3.1.3.87" evidence="1"/>
<dbReference type="EMBL" id="CP001215">
    <property type="protein sequence ID" value="ACP12294.1"/>
    <property type="molecule type" value="Genomic_DNA"/>
</dbReference>
<dbReference type="RefSeq" id="WP_000027476.1">
    <property type="nucleotide sequence ID" value="NC_012581.1"/>
</dbReference>
<dbReference type="SMR" id="C3LIA7"/>
<dbReference type="GeneID" id="45023927"/>
<dbReference type="KEGG" id="bah:BAMEG_4297"/>
<dbReference type="HOGENOM" id="CLU_058495_2_1_9"/>
<dbReference type="UniPathway" id="UPA00904">
    <property type="reaction ID" value="UER00877"/>
</dbReference>
<dbReference type="GO" id="GO:0043716">
    <property type="term" value="F:2-hydroxy-3-keto-5-methylthiopentenyl-1-phosphate phosphatase activity"/>
    <property type="evidence" value="ECO:0007669"/>
    <property type="project" value="UniProtKB-UniRule"/>
</dbReference>
<dbReference type="GO" id="GO:0019509">
    <property type="term" value="P:L-methionine salvage from methylthioadenosine"/>
    <property type="evidence" value="ECO:0007669"/>
    <property type="project" value="UniProtKB-UniRule"/>
</dbReference>
<dbReference type="CDD" id="cd07524">
    <property type="entry name" value="HAD_Pase"/>
    <property type="match status" value="1"/>
</dbReference>
<dbReference type="Gene3D" id="3.90.1470.20">
    <property type="match status" value="1"/>
</dbReference>
<dbReference type="Gene3D" id="3.40.50.1000">
    <property type="entry name" value="HAD superfamily/HAD-like"/>
    <property type="match status" value="1"/>
</dbReference>
<dbReference type="HAMAP" id="MF_01680">
    <property type="entry name" value="Salvage_MtnX"/>
    <property type="match status" value="1"/>
</dbReference>
<dbReference type="InterPro" id="IPR050849">
    <property type="entry name" value="HAD-like_hydrolase_phosphatase"/>
</dbReference>
<dbReference type="InterPro" id="IPR036412">
    <property type="entry name" value="HAD-like_sf"/>
</dbReference>
<dbReference type="InterPro" id="IPR017718">
    <property type="entry name" value="HAD-SF_hydro_IB_MtnX"/>
</dbReference>
<dbReference type="InterPro" id="IPR006384">
    <property type="entry name" value="HAD_hydro_PyrdxlP_Pase-like"/>
</dbReference>
<dbReference type="InterPro" id="IPR023214">
    <property type="entry name" value="HAD_sf"/>
</dbReference>
<dbReference type="NCBIfam" id="TIGR01489">
    <property type="entry name" value="DKMTPPase-SF"/>
    <property type="match status" value="1"/>
</dbReference>
<dbReference type="NCBIfam" id="TIGR01488">
    <property type="entry name" value="HAD-SF-IB"/>
    <property type="match status" value="1"/>
</dbReference>
<dbReference type="NCBIfam" id="NF007103">
    <property type="entry name" value="PRK09552.1"/>
    <property type="match status" value="1"/>
</dbReference>
<dbReference type="NCBIfam" id="TIGR03333">
    <property type="entry name" value="salvage_mtnX"/>
    <property type="match status" value="1"/>
</dbReference>
<dbReference type="PANTHER" id="PTHR28181:SF2">
    <property type="entry name" value="PHOSPHORIC MONOESTER HYDROLASE"/>
    <property type="match status" value="1"/>
</dbReference>
<dbReference type="PANTHER" id="PTHR28181">
    <property type="entry name" value="UPF0655 PROTEIN YCR015C"/>
    <property type="match status" value="1"/>
</dbReference>
<dbReference type="Pfam" id="PF12710">
    <property type="entry name" value="HAD"/>
    <property type="match status" value="1"/>
</dbReference>
<dbReference type="SUPFAM" id="SSF56784">
    <property type="entry name" value="HAD-like"/>
    <property type="match status" value="1"/>
</dbReference>
<name>MTNX_BACAC</name>
<proteinExistence type="inferred from homology"/>
<feature type="chain" id="PRO_1000187382" description="2-hydroxy-3-keto-5-methylthiopentenyl-1-phosphate phosphatase">
    <location>
        <begin position="1"/>
        <end position="219"/>
    </location>
</feature>
<comment type="function">
    <text evidence="1">Dephosphorylates 2-hydroxy-3-keto-5-methylthiopentenyl-1-phosphate (HK-MTPenyl-1-P) yielding 1,2-dihydroxy-3-keto-5-methylthiopentene (DHK-MTPene).</text>
</comment>
<comment type="catalytic activity">
    <reaction evidence="1">
        <text>2-hydroxy-5-methylsulfanyl-3-oxopent-1-enyl phosphate + H2O = 1,2-dihydroxy-5-(methylsulfanyl)pent-1-en-3-one + phosphate</text>
        <dbReference type="Rhea" id="RHEA:14481"/>
        <dbReference type="ChEBI" id="CHEBI:15377"/>
        <dbReference type="ChEBI" id="CHEBI:43474"/>
        <dbReference type="ChEBI" id="CHEBI:49252"/>
        <dbReference type="ChEBI" id="CHEBI:59505"/>
        <dbReference type="EC" id="3.1.3.87"/>
    </reaction>
</comment>
<comment type="pathway">
    <text evidence="1">Amino-acid biosynthesis; L-methionine biosynthesis via salvage pathway; L-methionine from S-methyl-5-thio-alpha-D-ribose 1-phosphate: step 4/6.</text>
</comment>
<comment type="similarity">
    <text evidence="1">Belongs to the HAD-like hydrolase superfamily. MtnX family.</text>
</comment>
<reference key="1">
    <citation type="submission" date="2008-10" db="EMBL/GenBank/DDBJ databases">
        <title>Genome sequence of Bacillus anthracis str. CDC 684.</title>
        <authorList>
            <person name="Dodson R.J."/>
            <person name="Munk A.C."/>
            <person name="Brettin T."/>
            <person name="Bruce D."/>
            <person name="Detter C."/>
            <person name="Tapia R."/>
            <person name="Han C."/>
            <person name="Sutton G."/>
            <person name="Sims D."/>
        </authorList>
    </citation>
    <scope>NUCLEOTIDE SEQUENCE [LARGE SCALE GENOMIC DNA]</scope>
    <source>
        <strain>CDC 684 / NRRL 3495</strain>
    </source>
</reference>
<accession>C3LIA7</accession>
<keyword id="KW-0028">Amino-acid biosynthesis</keyword>
<keyword id="KW-0378">Hydrolase</keyword>
<keyword id="KW-0486">Methionine biosynthesis</keyword>